<comment type="function">
    <text evidence="1">Snake venom serine protease that may act in the hemostasis system of the prey.</text>
</comment>
<comment type="subunit">
    <text evidence="1">Monomer.</text>
</comment>
<comment type="subcellular location">
    <subcellularLocation>
        <location>Secreted</location>
    </subcellularLocation>
</comment>
<comment type="tissue specificity">
    <text>Expressed by the venom gland.</text>
</comment>
<comment type="similarity">
    <text evidence="3">Belongs to the peptidase S1 family. Snake venom subfamily.</text>
</comment>
<gene>
    <name type="primary">JZTHR5</name>
</gene>
<proteinExistence type="evidence at transcript level"/>
<sequence length="260" mass="28681">MVLIRVLANLLILQLSYAQKSSKLVIGGDECNINEHRFLVALYTSRTLFCGGTLINQEWVLTAAHCNMEDIQIKLGMHSKKVPNEDEQKRVPKEKFFCLSSKNYTLWDKDIMLIRLDSPVKNSAHIAPLSLPSSPPSVGSDCRTMGWGRISSTKETYPDVPHCVNINLLEYEMCRAPYPEFELPATSRTLCAGILEGGKDTCVGDSGGPLICNGQSQGIASWGDDPCAQPHRPAAYTKVFDHLDWIENIIAGNTDASCPP</sequence>
<accession>Q9YGJ2</accession>
<protein>
    <recommendedName>
        <fullName>Snake venom serine protease pallabin</fullName>
        <shortName>SVSP</shortName>
        <ecNumber>3.4.21.-</ecNumber>
    </recommendedName>
</protein>
<organism>
    <name type="scientific">Gloydius halys</name>
    <name type="common">Chinese water mocassin</name>
    <name type="synonym">Agkistrodon halys</name>
    <dbReference type="NCBI Taxonomy" id="8714"/>
    <lineage>
        <taxon>Eukaryota</taxon>
        <taxon>Metazoa</taxon>
        <taxon>Chordata</taxon>
        <taxon>Craniata</taxon>
        <taxon>Vertebrata</taxon>
        <taxon>Euteleostomi</taxon>
        <taxon>Lepidosauria</taxon>
        <taxon>Squamata</taxon>
        <taxon>Bifurcata</taxon>
        <taxon>Unidentata</taxon>
        <taxon>Episquamata</taxon>
        <taxon>Toxicofera</taxon>
        <taxon>Serpentes</taxon>
        <taxon>Colubroidea</taxon>
        <taxon>Viperidae</taxon>
        <taxon>Crotalinae</taxon>
        <taxon>Gloydius</taxon>
    </lineage>
</organism>
<evidence type="ECO:0000250" key="1"/>
<evidence type="ECO:0000255" key="2"/>
<evidence type="ECO:0000255" key="3">
    <source>
        <dbReference type="PROSITE-ProRule" id="PRU00274"/>
    </source>
</evidence>
<dbReference type="EC" id="3.4.21.-"/>
<dbReference type="EMBL" id="AJ001210">
    <property type="protein sequence ID" value="CAA04612.1"/>
    <property type="molecule type" value="mRNA"/>
</dbReference>
<dbReference type="SMR" id="Q9YGJ2"/>
<dbReference type="MEROPS" id="S01.331"/>
<dbReference type="GlyCosmos" id="Q9YGJ2">
    <property type="glycosylation" value="1 site, No reported glycans"/>
</dbReference>
<dbReference type="GO" id="GO:0005576">
    <property type="term" value="C:extracellular region"/>
    <property type="evidence" value="ECO:0007669"/>
    <property type="project" value="UniProtKB-SubCell"/>
</dbReference>
<dbReference type="GO" id="GO:0030141">
    <property type="term" value="C:secretory granule"/>
    <property type="evidence" value="ECO:0007669"/>
    <property type="project" value="TreeGrafter"/>
</dbReference>
<dbReference type="GO" id="GO:0004252">
    <property type="term" value="F:serine-type endopeptidase activity"/>
    <property type="evidence" value="ECO:0007669"/>
    <property type="project" value="InterPro"/>
</dbReference>
<dbReference type="GO" id="GO:0090729">
    <property type="term" value="F:toxin activity"/>
    <property type="evidence" value="ECO:0007669"/>
    <property type="project" value="UniProtKB-KW"/>
</dbReference>
<dbReference type="GO" id="GO:0006508">
    <property type="term" value="P:proteolysis"/>
    <property type="evidence" value="ECO:0007669"/>
    <property type="project" value="UniProtKB-KW"/>
</dbReference>
<dbReference type="CDD" id="cd00190">
    <property type="entry name" value="Tryp_SPc"/>
    <property type="match status" value="1"/>
</dbReference>
<dbReference type="FunFam" id="2.40.10.10:FF:000158">
    <property type="entry name" value="Thrombin-like enzyme saxthrombin"/>
    <property type="match status" value="1"/>
</dbReference>
<dbReference type="FunFam" id="2.40.10.10:FF:000153">
    <property type="entry name" value="Venom plasminogen activator TSV-PA"/>
    <property type="match status" value="1"/>
</dbReference>
<dbReference type="Gene3D" id="2.40.10.10">
    <property type="entry name" value="Trypsin-like serine proteases"/>
    <property type="match status" value="2"/>
</dbReference>
<dbReference type="InterPro" id="IPR009003">
    <property type="entry name" value="Peptidase_S1_PA"/>
</dbReference>
<dbReference type="InterPro" id="IPR043504">
    <property type="entry name" value="Peptidase_S1_PA_chymotrypsin"/>
</dbReference>
<dbReference type="InterPro" id="IPR001314">
    <property type="entry name" value="Peptidase_S1A"/>
</dbReference>
<dbReference type="InterPro" id="IPR001254">
    <property type="entry name" value="Trypsin_dom"/>
</dbReference>
<dbReference type="InterPro" id="IPR018114">
    <property type="entry name" value="TRYPSIN_HIS"/>
</dbReference>
<dbReference type="InterPro" id="IPR033116">
    <property type="entry name" value="TRYPSIN_SER"/>
</dbReference>
<dbReference type="PANTHER" id="PTHR24271:SF47">
    <property type="entry name" value="KALLIKREIN-1"/>
    <property type="match status" value="1"/>
</dbReference>
<dbReference type="PANTHER" id="PTHR24271">
    <property type="entry name" value="KALLIKREIN-RELATED"/>
    <property type="match status" value="1"/>
</dbReference>
<dbReference type="Pfam" id="PF00089">
    <property type="entry name" value="Trypsin"/>
    <property type="match status" value="1"/>
</dbReference>
<dbReference type="PRINTS" id="PR00722">
    <property type="entry name" value="CHYMOTRYPSIN"/>
</dbReference>
<dbReference type="SMART" id="SM00020">
    <property type="entry name" value="Tryp_SPc"/>
    <property type="match status" value="1"/>
</dbReference>
<dbReference type="SUPFAM" id="SSF50494">
    <property type="entry name" value="Trypsin-like serine proteases"/>
    <property type="match status" value="1"/>
</dbReference>
<dbReference type="PROSITE" id="PS50240">
    <property type="entry name" value="TRYPSIN_DOM"/>
    <property type="match status" value="1"/>
</dbReference>
<dbReference type="PROSITE" id="PS00134">
    <property type="entry name" value="TRYPSIN_HIS"/>
    <property type="match status" value="1"/>
</dbReference>
<dbReference type="PROSITE" id="PS00135">
    <property type="entry name" value="TRYPSIN_SER"/>
    <property type="match status" value="1"/>
</dbReference>
<name>VSP1_GLOHA</name>
<feature type="signal peptide" evidence="1">
    <location>
        <begin position="1"/>
        <end position="18"/>
    </location>
</feature>
<feature type="propeptide" id="PRO_0000028373">
    <location>
        <begin position="19"/>
        <end position="24"/>
    </location>
</feature>
<feature type="chain" id="PRO_0000028374" description="Snake venom serine protease pallabin">
    <location>
        <begin position="25"/>
        <end position="260"/>
    </location>
</feature>
<feature type="domain" description="Peptidase S1" evidence="3">
    <location>
        <begin position="25"/>
        <end position="251"/>
    </location>
</feature>
<feature type="active site" description="Charge relay system" evidence="1">
    <location>
        <position position="65"/>
    </location>
</feature>
<feature type="active site" description="Charge relay system" evidence="1">
    <location>
        <position position="110"/>
    </location>
</feature>
<feature type="active site" description="Charge relay system" evidence="1">
    <location>
        <position position="206"/>
    </location>
</feature>
<feature type="glycosylation site" description="N-linked (GlcNAc...) asparagine" evidence="2">
    <location>
        <position position="103"/>
    </location>
</feature>
<feature type="disulfide bond" evidence="3">
    <location>
        <begin position="31"/>
        <end position="163"/>
    </location>
</feature>
<feature type="disulfide bond" evidence="3">
    <location>
        <begin position="50"/>
        <end position="66"/>
    </location>
</feature>
<feature type="disulfide bond" evidence="3">
    <location>
        <begin position="98"/>
        <end position="258"/>
    </location>
</feature>
<feature type="disulfide bond" evidence="3">
    <location>
        <begin position="142"/>
        <end position="212"/>
    </location>
</feature>
<feature type="disulfide bond" evidence="3">
    <location>
        <begin position="174"/>
        <end position="191"/>
    </location>
</feature>
<feature type="disulfide bond" evidence="3">
    <location>
        <begin position="202"/>
        <end position="227"/>
    </location>
</feature>
<reference key="1">
    <citation type="journal article" date="1999" name="Biochem. Mol. Biol. Int.">
        <title>Cloning, sequence analysis and expression in E. coli of the cDNA of thrombin like enzyme (pallabin) from Agkistrodon halys pallas.</title>
        <authorList>
            <person name="Fan C."/>
            <person name="Qian Y."/>
            <person name="Gong Y."/>
            <person name="Yang S."/>
        </authorList>
    </citation>
    <scope>NUCLEOTIDE SEQUENCE [MRNA]</scope>
    <source>
        <tissue>Venom gland</tissue>
    </source>
</reference>
<keyword id="KW-1015">Disulfide bond</keyword>
<keyword id="KW-0325">Glycoprotein</keyword>
<keyword id="KW-1199">Hemostasis impairing toxin</keyword>
<keyword id="KW-0378">Hydrolase</keyword>
<keyword id="KW-0645">Protease</keyword>
<keyword id="KW-0964">Secreted</keyword>
<keyword id="KW-0720">Serine protease</keyword>
<keyword id="KW-0732">Signal</keyword>
<keyword id="KW-0800">Toxin</keyword>
<keyword id="KW-0865">Zymogen</keyword>